<evidence type="ECO:0000250" key="1">
    <source>
        <dbReference type="UniProtKB" id="P05719"/>
    </source>
</evidence>
<evidence type="ECO:0000269" key="2">
    <source>
    </source>
</evidence>
<evidence type="ECO:0000269" key="3">
    <source>
    </source>
</evidence>
<evidence type="ECO:0000303" key="4">
    <source>
    </source>
</evidence>
<evidence type="ECO:0000303" key="5">
    <source>
    </source>
</evidence>
<evidence type="ECO:0000305" key="6"/>
<sequence>MNRGKLPEGWATAPVSTVTTLIRGVTYKKEQALNYLQDDYLPIIRANNIQNGKFDTTDLVFVPKNLVKESQKISPEDIVIAMSSGSKSVVGKSAHQRLPFECSFGAFCGALRPEKFISPNYIAHFTKSSFYRNKISSLSAGANINNIKPASFDLINIPIPSLAEQKIIAEKLDTLLAQVDSTKARLEQIPQILKRFRQAVLAAAVSGTLTTALRNSHSLIGWHSTNLGALIVDSCNGLAKRQGLNGNEITILRLADFKDAQRIIGNERKIKLDSKEENKYSLENDDILVIRVNGSADLAGRFIEYKSNGDIEGFCDHFIRLRLDSNKIMSRFLTYIANEGEGRFYLRNSLSTSAGQNTINQTSIKGLSFLLPPLKEQAEIVRRVEQLFAYADTIEKQVNNALTRVNSLTQSILAKAFRGELTAQWRAENPDLISGKNSAAALLEKIKAERAVSGGKKTSRKKA</sequence>
<keyword id="KW-0238">DNA-binding</keyword>
<keyword id="KW-0680">Restriction system</keyword>
<feature type="chain" id="PRO_0000198038" description="Type I restriction enzyme StySPI specificity subunit">
    <location>
        <begin position="1"/>
        <end position="463"/>
    </location>
</feature>
<accession>P07990</accession>
<gene>
    <name evidence="5" type="primary">hsdS</name>
</gene>
<reference key="1">
    <citation type="journal article" date="1986" name="Proc. Natl. Acad. Sci. U.S.A.">
        <title>Two DNA recognition domains of the specificity polypeptides of a family of type I restriction enzymes.</title>
        <authorList>
            <person name="Fuller-Pace F.V."/>
            <person name="Murray N.E."/>
        </authorList>
    </citation>
    <scope>NUCLEOTIDE SEQUENCE [GENOMIC DNA]</scope>
    <scope>FUNCTION</scope>
    <scope>DOMAIN</scope>
</reference>
<reference key="2">
    <citation type="journal article" date="1987" name="Mol. Microbiol.">
        <title>Reassortment of DNA recognition domains and the evolution of new specificities.</title>
        <authorList>
            <person name="Gann A.A.F."/>
            <person name="Campbell A.J.B."/>
            <person name="Collins J.F."/>
            <person name="Coulson A.F.W."/>
            <person name="Murray N.E."/>
        </authorList>
    </citation>
    <scope>DOMAIN</scope>
</reference>
<reference key="3">
    <citation type="journal article" date="2003" name="Nucleic Acids Res.">
        <title>A nomenclature for restriction enzymes, DNA methyltransferases, homing endonucleases and their genes.</title>
        <authorList>
            <person name="Roberts R.J."/>
            <person name="Belfort M."/>
            <person name="Bestor T."/>
            <person name="Bhagwat A.S."/>
            <person name="Bickle T.A."/>
            <person name="Bitinaite J."/>
            <person name="Blumenthal R.M."/>
            <person name="Degtyarev S.K."/>
            <person name="Dryden D.T."/>
            <person name="Dybvig K."/>
            <person name="Firman K."/>
            <person name="Gromova E.S."/>
            <person name="Gumport R.I."/>
            <person name="Halford S.E."/>
            <person name="Hattman S."/>
            <person name="Heitman J."/>
            <person name="Hornby D.P."/>
            <person name="Janulaitis A."/>
            <person name="Jeltsch A."/>
            <person name="Josephsen J."/>
            <person name="Kiss A."/>
            <person name="Klaenhammer T.R."/>
            <person name="Kobayashi I."/>
            <person name="Kong H."/>
            <person name="Krueger D.H."/>
            <person name="Lacks S."/>
            <person name="Marinus M.G."/>
            <person name="Miyahara M."/>
            <person name="Morgan R.D."/>
            <person name="Murray N.E."/>
            <person name="Nagaraja V."/>
            <person name="Piekarowicz A."/>
            <person name="Pingoud A."/>
            <person name="Raleigh E."/>
            <person name="Rao D.N."/>
            <person name="Reich N."/>
            <person name="Repin V.E."/>
            <person name="Selker E.U."/>
            <person name="Shaw P.C."/>
            <person name="Stein D.C."/>
            <person name="Stoddard B.L."/>
            <person name="Szybalski W."/>
            <person name="Trautner T.A."/>
            <person name="Van Etten J.L."/>
            <person name="Vitor J.M."/>
            <person name="Wilson G.G."/>
            <person name="Xu S.Y."/>
        </authorList>
    </citation>
    <scope>NOMENCLATURE</scope>
</reference>
<protein>
    <recommendedName>
        <fullName evidence="5">Type I restriction enzyme StySPI specificity subunit</fullName>
        <shortName evidence="5">S protein</shortName>
    </recommendedName>
    <alternativeName>
        <fullName evidence="5">Type I restriction and modification system SP</fullName>
    </alternativeName>
    <alternativeName>
        <fullName evidence="4">Type I specificity subunit S.StySPI</fullName>
        <shortName evidence="4">S.StySPI</shortName>
    </alternativeName>
    <alternativeName>
        <fullName>Type-1 restriction enzyme StySPI specificity subunit</fullName>
    </alternativeName>
</protein>
<dbReference type="EMBL" id="M14984">
    <property type="protein sequence ID" value="AAA27145.1"/>
    <property type="molecule type" value="Genomic_DNA"/>
</dbReference>
<dbReference type="SMR" id="P07990"/>
<dbReference type="REBASE" id="3689">
    <property type="entry name" value="S.StySPI"/>
</dbReference>
<dbReference type="PRO" id="PR:P07990"/>
<dbReference type="GO" id="GO:0003677">
    <property type="term" value="F:DNA binding"/>
    <property type="evidence" value="ECO:0007669"/>
    <property type="project" value="UniProtKB-KW"/>
</dbReference>
<dbReference type="GO" id="GO:0009307">
    <property type="term" value="P:DNA restriction-modification system"/>
    <property type="evidence" value="ECO:0007669"/>
    <property type="project" value="UniProtKB-KW"/>
</dbReference>
<dbReference type="CDD" id="cd17252">
    <property type="entry name" value="RMtype1_S_EcoKI-TRD1-CR1_like"/>
    <property type="match status" value="1"/>
</dbReference>
<dbReference type="CDD" id="cd17523">
    <property type="entry name" value="RMtype1_S_StySPI-TRD2-CR2_like"/>
    <property type="match status" value="1"/>
</dbReference>
<dbReference type="Gene3D" id="3.90.220.20">
    <property type="entry name" value="DNA methylase specificity domains"/>
    <property type="match status" value="2"/>
</dbReference>
<dbReference type="InterPro" id="IPR000055">
    <property type="entry name" value="Restrct_endonuc_typeI_TRD"/>
</dbReference>
<dbReference type="InterPro" id="IPR044946">
    <property type="entry name" value="Restrct_endonuc_typeI_TRD_sf"/>
</dbReference>
<dbReference type="InterPro" id="IPR051212">
    <property type="entry name" value="Type-I_RE_S_subunit"/>
</dbReference>
<dbReference type="PANTHER" id="PTHR43140:SF1">
    <property type="entry name" value="TYPE I RESTRICTION ENZYME ECOKI SPECIFICITY SUBUNIT"/>
    <property type="match status" value="1"/>
</dbReference>
<dbReference type="PANTHER" id="PTHR43140">
    <property type="entry name" value="TYPE-1 RESTRICTION ENZYME ECOKI SPECIFICITY PROTEIN"/>
    <property type="match status" value="1"/>
</dbReference>
<dbReference type="Pfam" id="PF01420">
    <property type="entry name" value="Methylase_S"/>
    <property type="match status" value="2"/>
</dbReference>
<dbReference type="SUPFAM" id="SSF116734">
    <property type="entry name" value="DNA methylase specificity domain"/>
    <property type="match status" value="2"/>
</dbReference>
<proteinExistence type="inferred from homology"/>
<name>T1S_SALPO</name>
<comment type="function">
    <text evidence="1 3 4">The specificity (S) subunit of a type I restriction enzyme; this subunit dictates DNA sequence specificity. The M and S subunits together form a methyltransferase (MTase) that methylates A-2 on the top strand and A-3 on the bottom strand of the sequence 5'-AACN(6)GTRC-3'. In the presence of the R subunit the complex can also act as an endonuclease, binding to the same target sequence but cutting the DNA some distance from this site. Whether the DNA is cut or modified depends on the methylation state of the target sequence. When the target site is unmodified, the DNA is cut. When the target site is hemimethylated, the complex acts as a maintenance MTase modifying the DNA so that both strands become methylated (PubMed:12654995, PubMed:3025838). After locating a non-methylated recognition site, the enzyme complex serves as a molecular motor that translocates DNA in an ATP-dependent manner until a collision occurs that triggers cleavage (By similarity).</text>
</comment>
<comment type="subunit">
    <text evidence="1">The type I restriction/modification system is composed of three polypeptides R, M and S; the restriction enzyme has stoichiometry R(2)M(2)S(1) while the methyltransferase is M(2)S(1).</text>
</comment>
<comment type="domain">
    <text evidence="2 3">Contains two DNA recognition domains, each specifying recognition of one of the two defined components of the target sequence (PubMed:3025838). The recognition domains can be exchanged between different S proteins, generating enzymes that have new sequence specificities (PubMed:2838725).</text>
</comment>
<comment type="miscellaneous">
    <text evidence="1">Type I restriction and modification enzymes are complex, multifunctional systems which require ATP, S-adenosyl methionine and Mg(2+) as cofactors and, in addition to their endonucleolytic and methylase activities, are potent DNA-dependent ATPases.</text>
</comment>
<comment type="similarity">
    <text evidence="6">Belongs to the type-I restriction system S methylase family.</text>
</comment>
<organism>
    <name type="scientific">Salmonella potsdam</name>
    <dbReference type="NCBI Taxonomy" id="597"/>
    <lineage>
        <taxon>Bacteria</taxon>
        <taxon>Pseudomonadati</taxon>
        <taxon>Pseudomonadota</taxon>
        <taxon>Gammaproteobacteria</taxon>
        <taxon>Enterobacterales</taxon>
        <taxon>Enterobacteriaceae</taxon>
        <taxon>Salmonella</taxon>
    </lineage>
</organism>